<accession>Q6QNY1</accession>
<accession>B4DQV2</accession>
<accession>Q5W040</accession>
<accession>Q8WUI8</accession>
<evidence type="ECO:0000250" key="1">
    <source>
        <dbReference type="UniProtKB" id="Q9CWG9"/>
    </source>
</evidence>
<evidence type="ECO:0000255" key="2"/>
<evidence type="ECO:0000256" key="3">
    <source>
        <dbReference type="SAM" id="MobiDB-lite"/>
    </source>
</evidence>
<evidence type="ECO:0000269" key="4">
    <source>
    </source>
</evidence>
<evidence type="ECO:0000269" key="5">
    <source>
    </source>
</evidence>
<evidence type="ECO:0000269" key="6">
    <source>
    </source>
</evidence>
<evidence type="ECO:0000269" key="7">
    <source>
    </source>
</evidence>
<evidence type="ECO:0000269" key="8">
    <source>
    </source>
</evidence>
<evidence type="ECO:0000303" key="9">
    <source>
    </source>
</evidence>
<evidence type="ECO:0000305" key="10"/>
<evidence type="ECO:0000305" key="11">
    <source>
    </source>
</evidence>
<evidence type="ECO:0007744" key="12">
    <source>
    </source>
</evidence>
<evidence type="ECO:0007744" key="13">
    <source>
    </source>
</evidence>
<keyword id="KW-0007">Acetylation</keyword>
<keyword id="KW-0025">Alternative splicing</keyword>
<keyword id="KW-0175">Coiled coil</keyword>
<keyword id="KW-0963">Cytoplasm</keyword>
<keyword id="KW-0206">Cytoskeleton</keyword>
<keyword id="KW-0458">Lysosome</keyword>
<keyword id="KW-0472">Membrane</keyword>
<keyword id="KW-1267">Proteomics identification</keyword>
<keyword id="KW-1185">Reference proteome</keyword>
<feature type="initiator methionine" description="Removed" evidence="12 13">
    <location>
        <position position="1"/>
    </location>
</feature>
<feature type="chain" id="PRO_0000234543" description="Biogenesis of lysosome-related organelles complex 1 subunit 2">
    <location>
        <begin position="2"/>
        <end position="142"/>
    </location>
</feature>
<feature type="region of interest" description="Disordered" evidence="3">
    <location>
        <begin position="1"/>
        <end position="33"/>
    </location>
</feature>
<feature type="coiled-coil region" evidence="2">
    <location>
        <begin position="79"/>
        <end position="127"/>
    </location>
</feature>
<feature type="compositionally biased region" description="Basic and acidic residues" evidence="3">
    <location>
        <begin position="12"/>
        <end position="33"/>
    </location>
</feature>
<feature type="modified residue" description="N-acetylalanine" evidence="12 13">
    <location>
        <position position="2"/>
    </location>
</feature>
<feature type="splice variant" id="VSP_018350" description="In isoform 2." evidence="9">
    <location>
        <begin position="1"/>
        <end position="43"/>
    </location>
</feature>
<feature type="sequence variant" id="VAR_054068" description="In dbSNP:rs33965491.">
    <original>S</original>
    <variation>R</variation>
    <location>
        <position position="13"/>
    </location>
</feature>
<dbReference type="EMBL" id="AY531265">
    <property type="protein sequence ID" value="AAT00461.1"/>
    <property type="molecule type" value="mRNA"/>
</dbReference>
<dbReference type="EMBL" id="AY278457">
    <property type="protein sequence ID" value="AAQ19606.1"/>
    <property type="molecule type" value="mRNA"/>
</dbReference>
<dbReference type="EMBL" id="AK298969">
    <property type="protein sequence ID" value="BAG61064.1"/>
    <property type="molecule type" value="mRNA"/>
</dbReference>
<dbReference type="EMBL" id="AL138921">
    <property type="status" value="NOT_ANNOTATED_CDS"/>
    <property type="molecule type" value="Genomic_DNA"/>
</dbReference>
<dbReference type="EMBL" id="AL139819">
    <property type="status" value="NOT_ANNOTATED_CDS"/>
    <property type="molecule type" value="Genomic_DNA"/>
</dbReference>
<dbReference type="EMBL" id="CH471066">
    <property type="protein sequence ID" value="EAW49836.1"/>
    <property type="molecule type" value="Genomic_DNA"/>
</dbReference>
<dbReference type="EMBL" id="BC020494">
    <property type="protein sequence ID" value="AAH20494.1"/>
    <property type="status" value="ALT_INIT"/>
    <property type="molecule type" value="mRNA"/>
</dbReference>
<dbReference type="CCDS" id="CCDS7490.1">
    <molecule id="Q6QNY1-1"/>
</dbReference>
<dbReference type="RefSeq" id="NP_001001342.1">
    <molecule id="Q6QNY1-2"/>
    <property type="nucleotide sequence ID" value="NM_001001342.2"/>
</dbReference>
<dbReference type="RefSeq" id="NP_001269366.1">
    <molecule id="Q6QNY1-2"/>
    <property type="nucleotide sequence ID" value="NM_001282437.2"/>
</dbReference>
<dbReference type="RefSeq" id="NP_001269367.1">
    <molecule id="Q6QNY1-2"/>
    <property type="nucleotide sequence ID" value="NM_001282438.1"/>
</dbReference>
<dbReference type="RefSeq" id="NP_776170.2">
    <molecule id="Q6QNY1-1"/>
    <property type="nucleotide sequence ID" value="NM_173809.4"/>
</dbReference>
<dbReference type="SMR" id="Q6QNY1"/>
<dbReference type="BioGRID" id="129431">
    <property type="interactions" value="77"/>
</dbReference>
<dbReference type="ComplexPortal" id="CPX-1910">
    <property type="entry name" value="BLOC-1 complex"/>
</dbReference>
<dbReference type="ComplexPortal" id="CPX-5029">
    <property type="entry name" value="BORC complex"/>
</dbReference>
<dbReference type="CORUM" id="Q6QNY1"/>
<dbReference type="FunCoup" id="Q6QNY1">
    <property type="interactions" value="307"/>
</dbReference>
<dbReference type="IntAct" id="Q6QNY1">
    <property type="interactions" value="70"/>
</dbReference>
<dbReference type="MINT" id="Q6QNY1"/>
<dbReference type="STRING" id="9606.ENSP00000359398"/>
<dbReference type="GlyGen" id="Q6QNY1">
    <property type="glycosylation" value="1 site, 1 N-linked glycan (1 site)"/>
</dbReference>
<dbReference type="iPTMnet" id="Q6QNY1"/>
<dbReference type="PhosphoSitePlus" id="Q6QNY1"/>
<dbReference type="SwissPalm" id="Q6QNY1"/>
<dbReference type="BioMuta" id="BLOC1S2"/>
<dbReference type="DMDM" id="74749300"/>
<dbReference type="jPOST" id="Q6QNY1"/>
<dbReference type="MassIVE" id="Q6QNY1"/>
<dbReference type="PaxDb" id="9606-ENSP00000359398"/>
<dbReference type="PeptideAtlas" id="Q6QNY1"/>
<dbReference type="ProteomicsDB" id="67307">
    <molecule id="Q6QNY1-1"/>
</dbReference>
<dbReference type="ProteomicsDB" id="67308">
    <molecule id="Q6QNY1-2"/>
</dbReference>
<dbReference type="Pumba" id="Q6QNY1"/>
<dbReference type="TopDownProteomics" id="Q6QNY1-1">
    <molecule id="Q6QNY1-1"/>
</dbReference>
<dbReference type="TopDownProteomics" id="Q6QNY1-2">
    <molecule id="Q6QNY1-2"/>
</dbReference>
<dbReference type="Antibodypedia" id="55739">
    <property type="antibodies" value="109 antibodies from 22 providers"/>
</dbReference>
<dbReference type="DNASU" id="282991"/>
<dbReference type="Ensembl" id="ENST00000370372.7">
    <molecule id="Q6QNY1-1"/>
    <property type="protein sequence ID" value="ENSP00000359398.2"/>
    <property type="gene ID" value="ENSG00000196072.12"/>
</dbReference>
<dbReference type="Ensembl" id="ENST00000441611.5">
    <molecule id="Q6QNY1-2"/>
    <property type="protein sequence ID" value="ENSP00000410865.1"/>
    <property type="gene ID" value="ENSG00000196072.12"/>
</dbReference>
<dbReference type="Ensembl" id="ENST00000614731.4">
    <molecule id="Q6QNY1-2"/>
    <property type="protein sequence ID" value="ENSP00000481847.1"/>
    <property type="gene ID" value="ENSG00000196072.12"/>
</dbReference>
<dbReference type="GeneID" id="282991"/>
<dbReference type="KEGG" id="hsa:282991"/>
<dbReference type="MANE-Select" id="ENST00000370372.7">
    <property type="protein sequence ID" value="ENSP00000359398.2"/>
    <property type="RefSeq nucleotide sequence ID" value="NM_173809.5"/>
    <property type="RefSeq protein sequence ID" value="NP_776170.2"/>
</dbReference>
<dbReference type="UCSC" id="uc001kqv.4">
    <molecule id="Q6QNY1-1"/>
    <property type="organism name" value="human"/>
</dbReference>
<dbReference type="AGR" id="HGNC:20984"/>
<dbReference type="CTD" id="282991"/>
<dbReference type="DisGeNET" id="282991"/>
<dbReference type="GeneCards" id="BLOC1S2"/>
<dbReference type="HGNC" id="HGNC:20984">
    <property type="gene designation" value="BLOC1S2"/>
</dbReference>
<dbReference type="HPA" id="ENSG00000196072">
    <property type="expression patterns" value="Low tissue specificity"/>
</dbReference>
<dbReference type="MIM" id="609768">
    <property type="type" value="gene"/>
</dbReference>
<dbReference type="neXtProt" id="NX_Q6QNY1"/>
<dbReference type="OpenTargets" id="ENSG00000196072"/>
<dbReference type="PharmGKB" id="PA134936108"/>
<dbReference type="VEuPathDB" id="HostDB:ENSG00000196072"/>
<dbReference type="eggNOG" id="KOG4559">
    <property type="taxonomic scope" value="Eukaryota"/>
</dbReference>
<dbReference type="GeneTree" id="ENSGT00390000005889"/>
<dbReference type="HOGENOM" id="CLU_110820_2_1_1"/>
<dbReference type="InParanoid" id="Q6QNY1"/>
<dbReference type="OMA" id="CSDMFEK"/>
<dbReference type="OrthoDB" id="244061at2759"/>
<dbReference type="PAN-GO" id="Q6QNY1">
    <property type="GO annotations" value="6 GO annotations based on evolutionary models"/>
</dbReference>
<dbReference type="PhylomeDB" id="Q6QNY1"/>
<dbReference type="TreeFam" id="TF313861"/>
<dbReference type="PathwayCommons" id="Q6QNY1"/>
<dbReference type="SignaLink" id="Q6QNY1"/>
<dbReference type="SIGNOR" id="Q6QNY1"/>
<dbReference type="BioGRID-ORCS" id="282991">
    <property type="hits" value="31 hits in 1159 CRISPR screens"/>
</dbReference>
<dbReference type="CD-CODE" id="8C2F96ED">
    <property type="entry name" value="Centrosome"/>
</dbReference>
<dbReference type="ChiTaRS" id="BLOC1S2">
    <property type="organism name" value="human"/>
</dbReference>
<dbReference type="GeneWiki" id="BLOC1S2"/>
<dbReference type="GenomeRNAi" id="282991"/>
<dbReference type="Pharos" id="Q6QNY1">
    <property type="development level" value="Tbio"/>
</dbReference>
<dbReference type="PRO" id="PR:Q6QNY1"/>
<dbReference type="Proteomes" id="UP000005640">
    <property type="component" value="Chromosome 10"/>
</dbReference>
<dbReference type="RNAct" id="Q6QNY1">
    <property type="molecule type" value="protein"/>
</dbReference>
<dbReference type="Bgee" id="ENSG00000196072">
    <property type="expression patterns" value="Expressed in tibialis anterior and 188 other cell types or tissues"/>
</dbReference>
<dbReference type="ExpressionAtlas" id="Q6QNY1">
    <property type="expression patterns" value="baseline and differential"/>
</dbReference>
<dbReference type="GO" id="GO:1904115">
    <property type="term" value="C:axon cytoplasm"/>
    <property type="evidence" value="ECO:0007669"/>
    <property type="project" value="GOC"/>
</dbReference>
<dbReference type="GO" id="GO:0031083">
    <property type="term" value="C:BLOC-1 complex"/>
    <property type="evidence" value="ECO:0000314"/>
    <property type="project" value="UniProtKB"/>
</dbReference>
<dbReference type="GO" id="GO:0099078">
    <property type="term" value="C:BORC complex"/>
    <property type="evidence" value="ECO:0000314"/>
    <property type="project" value="UniProtKB"/>
</dbReference>
<dbReference type="GO" id="GO:0005813">
    <property type="term" value="C:centrosome"/>
    <property type="evidence" value="ECO:0000314"/>
    <property type="project" value="UniProtKB"/>
</dbReference>
<dbReference type="GO" id="GO:0098574">
    <property type="term" value="C:cytoplasmic side of lysosomal membrane"/>
    <property type="evidence" value="ECO:0000303"/>
    <property type="project" value="ComplexPortal"/>
</dbReference>
<dbReference type="GO" id="GO:0005829">
    <property type="term" value="C:cytosol"/>
    <property type="evidence" value="ECO:0007669"/>
    <property type="project" value="Ensembl"/>
</dbReference>
<dbReference type="GO" id="GO:0000930">
    <property type="term" value="C:gamma-tubulin complex"/>
    <property type="evidence" value="ECO:0000314"/>
    <property type="project" value="UniProtKB"/>
</dbReference>
<dbReference type="GO" id="GO:0005739">
    <property type="term" value="C:mitochondrion"/>
    <property type="evidence" value="ECO:0000314"/>
    <property type="project" value="UniProtKB"/>
</dbReference>
<dbReference type="GO" id="GO:0005634">
    <property type="term" value="C:nucleus"/>
    <property type="evidence" value="ECO:0000314"/>
    <property type="project" value="UniProtKB"/>
</dbReference>
<dbReference type="GO" id="GO:0043015">
    <property type="term" value="F:gamma-tubulin binding"/>
    <property type="evidence" value="ECO:0000314"/>
    <property type="project" value="UniProtKB"/>
</dbReference>
<dbReference type="GO" id="GO:0008089">
    <property type="term" value="P:anterograde axonal transport"/>
    <property type="evidence" value="ECO:0000250"/>
    <property type="project" value="UniProtKB"/>
</dbReference>
<dbReference type="GO" id="GO:0048490">
    <property type="term" value="P:anterograde synaptic vesicle transport"/>
    <property type="evidence" value="ECO:0000250"/>
    <property type="project" value="UniProtKB"/>
</dbReference>
<dbReference type="GO" id="GO:0016197">
    <property type="term" value="P:endosomal transport"/>
    <property type="evidence" value="ECO:0000318"/>
    <property type="project" value="GO_Central"/>
</dbReference>
<dbReference type="GO" id="GO:0008625">
    <property type="term" value="P:extrinsic apoptotic signaling pathway via death domain receptors"/>
    <property type="evidence" value="ECO:0000314"/>
    <property type="project" value="UniProtKB"/>
</dbReference>
<dbReference type="GO" id="GO:0032418">
    <property type="term" value="P:lysosome localization"/>
    <property type="evidence" value="ECO:0000315"/>
    <property type="project" value="UniProtKB"/>
</dbReference>
<dbReference type="GO" id="GO:0032438">
    <property type="term" value="P:melanosome organization"/>
    <property type="evidence" value="ECO:0000303"/>
    <property type="project" value="UniProtKB"/>
</dbReference>
<dbReference type="GO" id="GO:0007020">
    <property type="term" value="P:microtubule nucleation"/>
    <property type="evidence" value="ECO:0000303"/>
    <property type="project" value="UniProtKB"/>
</dbReference>
<dbReference type="GO" id="GO:0097345">
    <property type="term" value="P:mitochondrial outer membrane permeabilization"/>
    <property type="evidence" value="ECO:0000314"/>
    <property type="project" value="UniProtKB"/>
</dbReference>
<dbReference type="GO" id="GO:0031175">
    <property type="term" value="P:neuron projection development"/>
    <property type="evidence" value="ECO:0000250"/>
    <property type="project" value="UniProtKB"/>
</dbReference>
<dbReference type="GO" id="GO:0072384">
    <property type="term" value="P:organelle transport along microtubule"/>
    <property type="evidence" value="ECO:0000303"/>
    <property type="project" value="ComplexPortal"/>
</dbReference>
<dbReference type="GO" id="GO:0060155">
    <property type="term" value="P:platelet dense granule organization"/>
    <property type="evidence" value="ECO:0000303"/>
    <property type="project" value="UniProtKB"/>
</dbReference>
<dbReference type="GO" id="GO:0008284">
    <property type="term" value="P:positive regulation of cell population proliferation"/>
    <property type="evidence" value="ECO:0000314"/>
    <property type="project" value="UniProtKB"/>
</dbReference>
<dbReference type="GO" id="GO:0045893">
    <property type="term" value="P:positive regulation of DNA-templated transcription"/>
    <property type="evidence" value="ECO:0000314"/>
    <property type="project" value="UniProtKB"/>
</dbReference>
<dbReference type="GO" id="GO:0051036">
    <property type="term" value="P:regulation of endosome size"/>
    <property type="evidence" value="ECO:0000303"/>
    <property type="project" value="ComplexPortal"/>
</dbReference>
<dbReference type="GO" id="GO:0062196">
    <property type="term" value="P:regulation of lysosome size"/>
    <property type="evidence" value="ECO:0000303"/>
    <property type="project" value="ComplexPortal"/>
</dbReference>
<dbReference type="InterPro" id="IPR019269">
    <property type="entry name" value="BLOC1_su2"/>
</dbReference>
<dbReference type="PANTHER" id="PTHR46479">
    <property type="entry name" value="BIOGENESIS OF LYSOSOME-RELATED ORGANELLES COMPLEX 1 SUBUNIT 2"/>
    <property type="match status" value="1"/>
</dbReference>
<dbReference type="PANTHER" id="PTHR46479:SF1">
    <property type="entry name" value="BIOGENESIS OF LYSOSOME-RELATED ORGANELLES COMPLEX 1 SUBUNIT 2"/>
    <property type="match status" value="1"/>
</dbReference>
<dbReference type="Pfam" id="PF10046">
    <property type="entry name" value="BLOC1_2"/>
    <property type="match status" value="1"/>
</dbReference>
<organism>
    <name type="scientific">Homo sapiens</name>
    <name type="common">Human</name>
    <dbReference type="NCBI Taxonomy" id="9606"/>
    <lineage>
        <taxon>Eukaryota</taxon>
        <taxon>Metazoa</taxon>
        <taxon>Chordata</taxon>
        <taxon>Craniata</taxon>
        <taxon>Vertebrata</taxon>
        <taxon>Euteleostomi</taxon>
        <taxon>Mammalia</taxon>
        <taxon>Eutheria</taxon>
        <taxon>Euarchontoglires</taxon>
        <taxon>Primates</taxon>
        <taxon>Haplorrhini</taxon>
        <taxon>Catarrhini</taxon>
        <taxon>Hominidae</taxon>
        <taxon>Homo</taxon>
    </lineage>
</organism>
<gene>
    <name type="primary">BLOC1S2</name>
    <name type="synonym">BLOS2</name>
    <name type="synonym">CEAP</name>
</gene>
<protein>
    <recommendedName>
        <fullName>Biogenesis of lysosome-related organelles complex 1 subunit 2</fullName>
        <shortName>BLOC-1 subunit 2</shortName>
    </recommendedName>
    <alternativeName>
        <fullName>Centrosome-associated protein</fullName>
    </alternativeName>
</protein>
<comment type="function">
    <text evidence="1 4 5 6 8">Component of the BLOC-1 complex, a complex that is required for normal biogenesis of lysosome-related organelles (LRO), such as platelet dense granules and melanosomes (PubMed:15102850, PubMed:17182842). In concert with the AP-3 complex, the BLOC-1 complex is required to target membrane protein cargos into vesicles assembled at cell bodies for delivery into neurites and nerve terminals. The BLOC-1 complex, in association with SNARE proteins, is also proposed to be involved in neurite extension (By similarity). As part of the BORC complex may play a role in lysosomes movement and localization at the cell periphery. Associated with the cytosolic face of lysosomes, the BORC complex may recruit ARL8B and couple lysosomes to microtubule plus-end-directed kinesin motor (PubMed:25898167). May play a role in cell proliferation (PubMed:15381421).</text>
</comment>
<comment type="subunit">
    <text evidence="1 4 5 7 8">Component of the biogenesis of lysosome-related organelles complex 1 (BLOC-1) composed of BLOC1S1, BLOC1S2, BLOC1S3, BLOC1S4, BLOC1S5, BLOC1S6, DTNBP1/BLOC1S7 and SNAPIN/BLOC1S8. Octamer composed of one copy each BLOC1S1, BLOC1S2, BLOC1S3, BLOC1S4, BLOC1S5, BLOC1S6, DTNBP1/BLOC1S7 and SNAPIN/BLOC1S8. Interacts directly with BLOC1S1, BLOC1S3, BLOC1S4, BLOC1S5 and SNAPIN (PubMed:15102850, PubMed:22203680). The BLOC-1 complex associates with the AP-3 protein complex and membrane protein cargos (By similarity). Component of the BLOC-one-related complex (BORC) which is composed of BLOC1S1, BLOC1S2, BORCS5, BORCS6, BORCS7, BORCS8, KXD1 and SNAPIN (PubMed:25898167). Interacts with gamma-tubulin (PubMed:15381421). Interacts with IFT57 (By similarity).</text>
</comment>
<comment type="interaction">
    <interactant intactId="EBI-465872">
        <id>Q6QNY1</id>
    </interactant>
    <interactant intactId="EBI-638194">
        <id>P53365</id>
        <label>ARFIP2</label>
    </interactant>
    <organismsDiffer>false</organismsDiffer>
    <experiments>3</experiments>
</comment>
<comment type="interaction">
    <interactant intactId="EBI-465872">
        <id>Q6QNY1</id>
    </interactant>
    <interactant intactId="EBI-10229433">
        <id>Q13515</id>
        <label>BFSP2</label>
    </interactant>
    <organismsDiffer>false</organismsDiffer>
    <experiments>3</experiments>
</comment>
<comment type="interaction">
    <interactant intactId="EBI-465872">
        <id>Q6QNY1</id>
    </interactant>
    <interactant intactId="EBI-348630">
        <id>P78537</id>
        <label>BLOC1S1</label>
    </interactant>
    <organismsDiffer>false</organismsDiffer>
    <experiments>5</experiments>
</comment>
<comment type="interaction">
    <interactant intactId="EBI-465872">
        <id>Q6QNY1</id>
    </interactant>
    <interactant intactId="EBI-465930">
        <id>Q6QNY0</id>
        <label>BLOC1S3</label>
    </interactant>
    <organismsDiffer>false</organismsDiffer>
    <experiments>3</experiments>
</comment>
<comment type="interaction">
    <interactant intactId="EBI-465872">
        <id>Q6QNY1</id>
    </interactant>
    <interactant intactId="EBI-465861">
        <id>Q8TDH9</id>
        <label>BLOC1S5</label>
    </interactant>
    <organismsDiffer>false</organismsDiffer>
    <experiments>4</experiments>
</comment>
<comment type="interaction">
    <interactant intactId="EBI-465872">
        <id>Q6QNY1</id>
    </interactant>
    <interactant intactId="EBI-10749669">
        <id>Q8IYE0</id>
        <label>CCDC146</label>
    </interactant>
    <organismsDiffer>false</organismsDiffer>
    <experiments>3</experiments>
</comment>
<comment type="interaction">
    <interactant intactId="EBI-465872">
        <id>Q6QNY1</id>
    </interactant>
    <interactant intactId="EBI-10175300">
        <id>Q8TD31-3</id>
        <label>CCHCR1</label>
    </interactant>
    <organismsDiffer>false</organismsDiffer>
    <experiments>3</experiments>
</comment>
<comment type="interaction">
    <interactant intactId="EBI-465872">
        <id>Q6QNY1</id>
    </interactant>
    <interactant intactId="EBI-395261">
        <id>P24863</id>
        <label>CCNC</label>
    </interactant>
    <organismsDiffer>false</organismsDiffer>
    <experiments>3</experiments>
</comment>
<comment type="interaction">
    <interactant intactId="EBI-465872">
        <id>Q6QNY1</id>
    </interactant>
    <interactant intactId="EBI-11962928">
        <id>Q9UI47-2</id>
        <label>CTNNA3</label>
    </interactant>
    <organismsDiffer>false</organismsDiffer>
    <experiments>3</experiments>
</comment>
<comment type="interaction">
    <interactant intactId="EBI-465872">
        <id>Q6QNY1</id>
    </interactant>
    <interactant intactId="EBI-715074">
        <id>Q13561</id>
        <label>DCTN2</label>
    </interactant>
    <organismsDiffer>false</organismsDiffer>
    <experiments>3</experiments>
</comment>
<comment type="interaction">
    <interactant intactId="EBI-465872">
        <id>Q6QNY1</id>
    </interactant>
    <interactant intactId="EBI-953772">
        <id>Q96DN0</id>
        <label>ERP27</label>
    </interactant>
    <organismsDiffer>false</organismsDiffer>
    <experiments>3</experiments>
</comment>
<comment type="interaction">
    <interactant intactId="EBI-465872">
        <id>Q6QNY1</id>
    </interactant>
    <interactant intactId="EBI-742102">
        <id>Q8IYI6</id>
        <label>EXOC8</label>
    </interactant>
    <organismsDiffer>false</organismsDiffer>
    <experiments>3</experiments>
</comment>
<comment type="interaction">
    <interactant intactId="EBI-465872">
        <id>Q6QNY1</id>
    </interactant>
    <interactant intactId="EBI-7225287">
        <id>Q96MY7</id>
        <label>FAM161B</label>
    </interactant>
    <organismsDiffer>false</organismsDiffer>
    <experiments>3</experiments>
</comment>
<comment type="interaction">
    <interactant intactId="EBI-465872">
        <id>Q6QNY1</id>
    </interactant>
    <interactant intactId="EBI-10175124">
        <id>Q8IZU0</id>
        <label>FAM9B</label>
    </interactant>
    <organismsDiffer>false</organismsDiffer>
    <experiments>3</experiments>
</comment>
<comment type="interaction">
    <interactant intactId="EBI-465872">
        <id>Q6QNY1</id>
    </interactant>
    <interactant intactId="EBI-448202">
        <id>O95257</id>
        <label>GADD45G</label>
    </interactant>
    <organismsDiffer>false</organismsDiffer>
    <experiments>3</experiments>
</comment>
<comment type="interaction">
    <interactant intactId="EBI-465872">
        <id>Q6QNY1</id>
    </interactant>
    <interactant intactId="EBI-744104">
        <id>P55040</id>
        <label>GEM</label>
    </interactant>
    <organismsDiffer>false</organismsDiffer>
    <experiments>3</experiments>
</comment>
<comment type="interaction">
    <interactant intactId="EBI-465872">
        <id>Q6QNY1</id>
    </interactant>
    <interactant intactId="EBI-725672">
        <id>Q9NWB7</id>
        <label>IFT57</label>
    </interactant>
    <organismsDiffer>false</organismsDiffer>
    <experiments>3</experiments>
</comment>
<comment type="interaction">
    <interactant intactId="EBI-465872">
        <id>Q6QNY1</id>
    </interactant>
    <interactant intactId="EBI-12084444">
        <id>Q7Z3Y9</id>
        <label>KRT26</label>
    </interactant>
    <organismsDiffer>false</organismsDiffer>
    <experiments>3</experiments>
</comment>
<comment type="interaction">
    <interactant intactId="EBI-465872">
        <id>Q6QNY1</id>
    </interactant>
    <interactant intactId="EBI-10181968">
        <id>Q7Z4N8</id>
        <label>P4HA3</label>
    </interactant>
    <organismsDiffer>false</organismsDiffer>
    <experiments>3</experiments>
</comment>
<comment type="interaction">
    <interactant intactId="EBI-465872">
        <id>Q6QNY1</id>
    </interactant>
    <interactant intactId="EBI-79165">
        <id>Q9NRD5</id>
        <label>PICK1</label>
    </interactant>
    <organismsDiffer>false</organismsDiffer>
    <experiments>3</experiments>
</comment>
<comment type="interaction">
    <interactant intactId="EBI-465872">
        <id>Q6QNY1</id>
    </interactant>
    <interactant intactId="EBI-747035">
        <id>Q9H788</id>
        <label>SH2D4A</label>
    </interactant>
    <organismsDiffer>false</organismsDiffer>
    <experiments>3</experiments>
</comment>
<comment type="interaction">
    <interactant intactId="EBI-465872">
        <id>Q6QNY1</id>
    </interactant>
    <interactant intactId="EBI-296723">
        <id>O95295</id>
        <label>SNAPIN</label>
    </interactant>
    <organismsDiffer>false</organismsDiffer>
    <experiments>10</experiments>
</comment>
<comment type="interaction">
    <interactant intactId="EBI-465872">
        <id>Q6QNY1</id>
    </interactant>
    <interactant intactId="EBI-10172867">
        <id>A1L4H1</id>
        <label>SSC5D</label>
    </interactant>
    <organismsDiffer>false</organismsDiffer>
    <experiments>3</experiments>
</comment>
<comment type="interaction">
    <interactant intactId="EBI-465872">
        <id>Q6QNY1</id>
    </interactant>
    <interactant intactId="EBI-11956649">
        <id>P32856-2</id>
        <label>STX2</label>
    </interactant>
    <organismsDiffer>false</organismsDiffer>
    <experiments>3</experiments>
</comment>
<comment type="interaction">
    <interactant intactId="EBI-465872">
        <id>Q6QNY1</id>
    </interactant>
    <interactant intactId="EBI-11059915">
        <id>Q8N7C3</id>
        <label>TRIML2</label>
    </interactant>
    <organismsDiffer>false</organismsDiffer>
    <experiments>5</experiments>
</comment>
<comment type="interaction">
    <interactant intactId="EBI-465872">
        <id>Q6QNY1</id>
    </interactant>
    <interactant intactId="EBI-712969">
        <id>Q9Y3C0</id>
        <label>WASHC3</label>
    </interactant>
    <organismsDiffer>false</organismsDiffer>
    <experiments>5</experiments>
</comment>
<comment type="subcellular location">
    <subcellularLocation>
        <location evidence="5">Cytoplasm</location>
        <location evidence="5">Cytoskeleton</location>
        <location evidence="5">Microtubule organizing center</location>
        <location evidence="5">Centrosome</location>
    </subcellularLocation>
    <subcellularLocation>
        <location evidence="11">Lysosome membrane</location>
    </subcellularLocation>
    <text evidence="5">Localizes to the centrosomes in a microtubule-dependent manner.</text>
</comment>
<comment type="alternative products">
    <event type="alternative splicing"/>
    <isoform>
        <id>Q6QNY1-1</id>
        <name>1</name>
        <name>Ceap-16</name>
        <sequence type="displayed"/>
    </isoform>
    <isoform>
        <id>Q6QNY1-2</id>
        <name>2</name>
        <name>Ceap-11</name>
        <sequence type="described" ref="VSP_018350"/>
    </isoform>
</comment>
<comment type="tissue specificity">
    <text evidence="5">Isoform 1 and isoform 2 are widely expressed. Expressed in various malignant tumor tissues (at protein level).</text>
</comment>
<comment type="similarity">
    <text evidence="10">Belongs to the BLOC1S2 family.</text>
</comment>
<comment type="sequence caution" evidence="10">
    <conflict type="erroneous initiation">
        <sequence resource="EMBL-CDS" id="AAH20494"/>
    </conflict>
    <text>Truncated N-terminus.</text>
</comment>
<reference key="1">
    <citation type="journal article" date="2004" name="J. Biol. Chem.">
        <title>Identification of snapin and three novel proteins (BLOS1, BLOS2, and BLOS3/reduced pigmentation) as subunits of biogenesis of lysosome-related organelles complex-1 (BLOC-1).</title>
        <authorList>
            <person name="Starcevic M."/>
            <person name="Dell'Angelica E.C."/>
        </authorList>
    </citation>
    <scope>NUCLEOTIDE SEQUENCE [MRNA] (ISOFORM 1)</scope>
    <scope>IDENTIFICATION IN THE BLOC-1 COMPLEX</scope>
    <scope>FUNCTION</scope>
    <scope>INTERACTION WITH BLOC1S1; BLOC1S3; BLOC1S4; BLOC1S5 AND SNAPIN</scope>
    <source>
        <tissue>Cervix carcinoma</tissue>
    </source>
</reference>
<reference key="2">
    <citation type="journal article" date="2004" name="J. Mol. Biol.">
        <title>Characterization of Ceap-11 and Ceap-16, two novel splicing-variant-proteins, associated with centrosome, microtubule aggregation and cell proliferation.</title>
        <authorList>
            <person name="Wang Z."/>
            <person name="Wei H."/>
            <person name="Yu Y."/>
            <person name="Sun J."/>
            <person name="Yang Y."/>
            <person name="Xing G."/>
            <person name="Wu S."/>
            <person name="Zhou Y."/>
            <person name="Zhu Y."/>
            <person name="Zhang C."/>
            <person name="Zhou T."/>
            <person name="Zhao X."/>
            <person name="Sun Q."/>
            <person name="He F."/>
        </authorList>
    </citation>
    <scope>NUCLEOTIDE SEQUENCE [MRNA] (ISOFORM 2)</scope>
    <scope>FUNCTION</scope>
    <scope>TISSUE SPECIFICITY</scope>
    <scope>SUBCELLULAR LOCATION</scope>
    <scope>INTERACTION WITH GAMMA-TUBULIN</scope>
    <scope>ALTERNATIVE SPLICING (ISOFORM 1)</scope>
    <source>
        <tissue>Fetal liver</tissue>
    </source>
</reference>
<reference key="3">
    <citation type="journal article" date="2004" name="Nat. Genet.">
        <title>Complete sequencing and characterization of 21,243 full-length human cDNAs.</title>
        <authorList>
            <person name="Ota T."/>
            <person name="Suzuki Y."/>
            <person name="Nishikawa T."/>
            <person name="Otsuki T."/>
            <person name="Sugiyama T."/>
            <person name="Irie R."/>
            <person name="Wakamatsu A."/>
            <person name="Hayashi K."/>
            <person name="Sato H."/>
            <person name="Nagai K."/>
            <person name="Kimura K."/>
            <person name="Makita H."/>
            <person name="Sekine M."/>
            <person name="Obayashi M."/>
            <person name="Nishi T."/>
            <person name="Shibahara T."/>
            <person name="Tanaka T."/>
            <person name="Ishii S."/>
            <person name="Yamamoto J."/>
            <person name="Saito K."/>
            <person name="Kawai Y."/>
            <person name="Isono Y."/>
            <person name="Nakamura Y."/>
            <person name="Nagahari K."/>
            <person name="Murakami K."/>
            <person name="Yasuda T."/>
            <person name="Iwayanagi T."/>
            <person name="Wagatsuma M."/>
            <person name="Shiratori A."/>
            <person name="Sudo H."/>
            <person name="Hosoiri T."/>
            <person name="Kaku Y."/>
            <person name="Kodaira H."/>
            <person name="Kondo H."/>
            <person name="Sugawara M."/>
            <person name="Takahashi M."/>
            <person name="Kanda K."/>
            <person name="Yokoi T."/>
            <person name="Furuya T."/>
            <person name="Kikkawa E."/>
            <person name="Omura Y."/>
            <person name="Abe K."/>
            <person name="Kamihara K."/>
            <person name="Katsuta N."/>
            <person name="Sato K."/>
            <person name="Tanikawa M."/>
            <person name="Yamazaki M."/>
            <person name="Ninomiya K."/>
            <person name="Ishibashi T."/>
            <person name="Yamashita H."/>
            <person name="Murakawa K."/>
            <person name="Fujimori K."/>
            <person name="Tanai H."/>
            <person name="Kimata M."/>
            <person name="Watanabe M."/>
            <person name="Hiraoka S."/>
            <person name="Chiba Y."/>
            <person name="Ishida S."/>
            <person name="Ono Y."/>
            <person name="Takiguchi S."/>
            <person name="Watanabe S."/>
            <person name="Yosida M."/>
            <person name="Hotuta T."/>
            <person name="Kusano J."/>
            <person name="Kanehori K."/>
            <person name="Takahashi-Fujii A."/>
            <person name="Hara H."/>
            <person name="Tanase T.-O."/>
            <person name="Nomura Y."/>
            <person name="Togiya S."/>
            <person name="Komai F."/>
            <person name="Hara R."/>
            <person name="Takeuchi K."/>
            <person name="Arita M."/>
            <person name="Imose N."/>
            <person name="Musashino K."/>
            <person name="Yuuki H."/>
            <person name="Oshima A."/>
            <person name="Sasaki N."/>
            <person name="Aotsuka S."/>
            <person name="Yoshikawa Y."/>
            <person name="Matsunawa H."/>
            <person name="Ichihara T."/>
            <person name="Shiohata N."/>
            <person name="Sano S."/>
            <person name="Moriya S."/>
            <person name="Momiyama H."/>
            <person name="Satoh N."/>
            <person name="Takami S."/>
            <person name="Terashima Y."/>
            <person name="Suzuki O."/>
            <person name="Nakagawa S."/>
            <person name="Senoh A."/>
            <person name="Mizoguchi H."/>
            <person name="Goto Y."/>
            <person name="Shimizu F."/>
            <person name="Wakebe H."/>
            <person name="Hishigaki H."/>
            <person name="Watanabe T."/>
            <person name="Sugiyama A."/>
            <person name="Takemoto M."/>
            <person name="Kawakami B."/>
            <person name="Yamazaki M."/>
            <person name="Watanabe K."/>
            <person name="Kumagai A."/>
            <person name="Itakura S."/>
            <person name="Fukuzumi Y."/>
            <person name="Fujimori Y."/>
            <person name="Komiyama M."/>
            <person name="Tashiro H."/>
            <person name="Tanigami A."/>
            <person name="Fujiwara T."/>
            <person name="Ono T."/>
            <person name="Yamada K."/>
            <person name="Fujii Y."/>
            <person name="Ozaki K."/>
            <person name="Hirao M."/>
            <person name="Ohmori Y."/>
            <person name="Kawabata A."/>
            <person name="Hikiji T."/>
            <person name="Kobatake N."/>
            <person name="Inagaki H."/>
            <person name="Ikema Y."/>
            <person name="Okamoto S."/>
            <person name="Okitani R."/>
            <person name="Kawakami T."/>
            <person name="Noguchi S."/>
            <person name="Itoh T."/>
            <person name="Shigeta K."/>
            <person name="Senba T."/>
            <person name="Matsumura K."/>
            <person name="Nakajima Y."/>
            <person name="Mizuno T."/>
            <person name="Morinaga M."/>
            <person name="Sasaki M."/>
            <person name="Togashi T."/>
            <person name="Oyama M."/>
            <person name="Hata H."/>
            <person name="Watanabe M."/>
            <person name="Komatsu T."/>
            <person name="Mizushima-Sugano J."/>
            <person name="Satoh T."/>
            <person name="Shirai Y."/>
            <person name="Takahashi Y."/>
            <person name="Nakagawa K."/>
            <person name="Okumura K."/>
            <person name="Nagase T."/>
            <person name="Nomura N."/>
            <person name="Kikuchi H."/>
            <person name="Masuho Y."/>
            <person name="Yamashita R."/>
            <person name="Nakai K."/>
            <person name="Yada T."/>
            <person name="Nakamura Y."/>
            <person name="Ohara O."/>
            <person name="Isogai T."/>
            <person name="Sugano S."/>
        </authorList>
    </citation>
    <scope>NUCLEOTIDE SEQUENCE [LARGE SCALE MRNA] (ISOFORM 1)</scope>
</reference>
<reference key="4">
    <citation type="journal article" date="2004" name="Nature">
        <title>The DNA sequence and comparative analysis of human chromosome 10.</title>
        <authorList>
            <person name="Deloukas P."/>
            <person name="Earthrowl M.E."/>
            <person name="Grafham D.V."/>
            <person name="Rubenfield M."/>
            <person name="French L."/>
            <person name="Steward C.A."/>
            <person name="Sims S.K."/>
            <person name="Jones M.C."/>
            <person name="Searle S."/>
            <person name="Scott C."/>
            <person name="Howe K."/>
            <person name="Hunt S.E."/>
            <person name="Andrews T.D."/>
            <person name="Gilbert J.G.R."/>
            <person name="Swarbreck D."/>
            <person name="Ashurst J.L."/>
            <person name="Taylor A."/>
            <person name="Battles J."/>
            <person name="Bird C.P."/>
            <person name="Ainscough R."/>
            <person name="Almeida J.P."/>
            <person name="Ashwell R.I.S."/>
            <person name="Ambrose K.D."/>
            <person name="Babbage A.K."/>
            <person name="Bagguley C.L."/>
            <person name="Bailey J."/>
            <person name="Banerjee R."/>
            <person name="Bates K."/>
            <person name="Beasley H."/>
            <person name="Bray-Allen S."/>
            <person name="Brown A.J."/>
            <person name="Brown J.Y."/>
            <person name="Burford D.C."/>
            <person name="Burrill W."/>
            <person name="Burton J."/>
            <person name="Cahill P."/>
            <person name="Camire D."/>
            <person name="Carter N.P."/>
            <person name="Chapman J.C."/>
            <person name="Clark S.Y."/>
            <person name="Clarke G."/>
            <person name="Clee C.M."/>
            <person name="Clegg S."/>
            <person name="Corby N."/>
            <person name="Coulson A."/>
            <person name="Dhami P."/>
            <person name="Dutta I."/>
            <person name="Dunn M."/>
            <person name="Faulkner L."/>
            <person name="Frankish A."/>
            <person name="Frankland J.A."/>
            <person name="Garner P."/>
            <person name="Garnett J."/>
            <person name="Gribble S."/>
            <person name="Griffiths C."/>
            <person name="Grocock R."/>
            <person name="Gustafson E."/>
            <person name="Hammond S."/>
            <person name="Harley J.L."/>
            <person name="Hart E."/>
            <person name="Heath P.D."/>
            <person name="Ho T.P."/>
            <person name="Hopkins B."/>
            <person name="Horne J."/>
            <person name="Howden P.J."/>
            <person name="Huckle E."/>
            <person name="Hynds C."/>
            <person name="Johnson C."/>
            <person name="Johnson D."/>
            <person name="Kana A."/>
            <person name="Kay M."/>
            <person name="Kimberley A.M."/>
            <person name="Kershaw J.K."/>
            <person name="Kokkinaki M."/>
            <person name="Laird G.K."/>
            <person name="Lawlor S."/>
            <person name="Lee H.M."/>
            <person name="Leongamornlert D.A."/>
            <person name="Laird G."/>
            <person name="Lloyd C."/>
            <person name="Lloyd D.M."/>
            <person name="Loveland J."/>
            <person name="Lovell J."/>
            <person name="McLaren S."/>
            <person name="McLay K.E."/>
            <person name="McMurray A."/>
            <person name="Mashreghi-Mohammadi M."/>
            <person name="Matthews L."/>
            <person name="Milne S."/>
            <person name="Nickerson T."/>
            <person name="Nguyen M."/>
            <person name="Overton-Larty E."/>
            <person name="Palmer S.A."/>
            <person name="Pearce A.V."/>
            <person name="Peck A.I."/>
            <person name="Pelan S."/>
            <person name="Phillimore B."/>
            <person name="Porter K."/>
            <person name="Rice C.M."/>
            <person name="Rogosin A."/>
            <person name="Ross M.T."/>
            <person name="Sarafidou T."/>
            <person name="Sehra H.K."/>
            <person name="Shownkeen R."/>
            <person name="Skuce C.D."/>
            <person name="Smith M."/>
            <person name="Standring L."/>
            <person name="Sycamore N."/>
            <person name="Tester J."/>
            <person name="Thorpe A."/>
            <person name="Torcasso W."/>
            <person name="Tracey A."/>
            <person name="Tromans A."/>
            <person name="Tsolas J."/>
            <person name="Wall M."/>
            <person name="Walsh J."/>
            <person name="Wang H."/>
            <person name="Weinstock K."/>
            <person name="West A.P."/>
            <person name="Willey D.L."/>
            <person name="Whitehead S.L."/>
            <person name="Wilming L."/>
            <person name="Wray P.W."/>
            <person name="Young L."/>
            <person name="Chen Y."/>
            <person name="Lovering R.C."/>
            <person name="Moschonas N.K."/>
            <person name="Siebert R."/>
            <person name="Fechtel K."/>
            <person name="Bentley D."/>
            <person name="Durbin R.M."/>
            <person name="Hubbard T."/>
            <person name="Doucette-Stamm L."/>
            <person name="Beck S."/>
            <person name="Smith D.R."/>
            <person name="Rogers J."/>
        </authorList>
    </citation>
    <scope>NUCLEOTIDE SEQUENCE [LARGE SCALE GENOMIC DNA]</scope>
</reference>
<reference key="5">
    <citation type="submission" date="2005-09" db="EMBL/GenBank/DDBJ databases">
        <authorList>
            <person name="Mural R.J."/>
            <person name="Istrail S."/>
            <person name="Sutton G.G."/>
            <person name="Florea L."/>
            <person name="Halpern A.L."/>
            <person name="Mobarry C.M."/>
            <person name="Lippert R."/>
            <person name="Walenz B."/>
            <person name="Shatkay H."/>
            <person name="Dew I."/>
            <person name="Miller J.R."/>
            <person name="Flanigan M.J."/>
            <person name="Edwards N.J."/>
            <person name="Bolanos R."/>
            <person name="Fasulo D."/>
            <person name="Halldorsson B.V."/>
            <person name="Hannenhalli S."/>
            <person name="Turner R."/>
            <person name="Yooseph S."/>
            <person name="Lu F."/>
            <person name="Nusskern D.R."/>
            <person name="Shue B.C."/>
            <person name="Zheng X.H."/>
            <person name="Zhong F."/>
            <person name="Delcher A.L."/>
            <person name="Huson D.H."/>
            <person name="Kravitz S.A."/>
            <person name="Mouchard L."/>
            <person name="Reinert K."/>
            <person name="Remington K.A."/>
            <person name="Clark A.G."/>
            <person name="Waterman M.S."/>
            <person name="Eichler E.E."/>
            <person name="Adams M.D."/>
            <person name="Hunkapiller M.W."/>
            <person name="Myers E.W."/>
            <person name="Venter J.C."/>
        </authorList>
    </citation>
    <scope>NUCLEOTIDE SEQUENCE [LARGE SCALE GENOMIC DNA]</scope>
</reference>
<reference key="6">
    <citation type="journal article" date="2004" name="Genome Res.">
        <title>The status, quality, and expansion of the NIH full-length cDNA project: the Mammalian Gene Collection (MGC).</title>
        <authorList>
            <consortium name="The MGC Project Team"/>
        </authorList>
    </citation>
    <scope>NUCLEOTIDE SEQUENCE [LARGE SCALE MRNA] OF 27-142 (ISOFORM 1)</scope>
    <source>
        <tissue>Pancreas</tissue>
    </source>
</reference>
<reference key="7">
    <citation type="journal article" date="2007" name="Mol. Biol. Cell">
        <title>BLOC-1 is required for cargo-specific sorting from vacuolar early endosomes toward lysosome-related organelles.</title>
        <authorList>
            <person name="Setty S.R."/>
            <person name="Tenza D."/>
            <person name="Truschel S.T."/>
            <person name="Chou E."/>
            <person name="Sviderskaya E.V."/>
            <person name="Theos A.C."/>
            <person name="Lamoreux M.L."/>
            <person name="Di Pietro S.M."/>
            <person name="Starcevic M."/>
            <person name="Bennett D.C."/>
            <person name="Dell'Angelica E.C."/>
            <person name="Raposo G."/>
            <person name="Marks M.S."/>
        </authorList>
    </citation>
    <scope>FUNCTION</scope>
</reference>
<reference key="8">
    <citation type="journal article" date="2011" name="BMC Syst. Biol.">
        <title>Initial characterization of the human central proteome.</title>
        <authorList>
            <person name="Burkard T.R."/>
            <person name="Planyavsky M."/>
            <person name="Kaupe I."/>
            <person name="Breitwieser F.P."/>
            <person name="Buerckstuemmer T."/>
            <person name="Bennett K.L."/>
            <person name="Superti-Furga G."/>
            <person name="Colinge J."/>
        </authorList>
    </citation>
    <scope>IDENTIFICATION BY MASS SPECTROMETRY [LARGE SCALE ANALYSIS]</scope>
</reference>
<reference key="9">
    <citation type="journal article" date="2012" name="J. Biol. Chem.">
        <title>Assembly and architecture of biogenesis of lysosome-related organelles complex-1 (BLOC-1).</title>
        <authorList>
            <person name="Lee H.H."/>
            <person name="Nemecek D."/>
            <person name="Schindler C."/>
            <person name="Smith W.J."/>
            <person name="Ghirlando R."/>
            <person name="Steven A.C."/>
            <person name="Bonifacino J.S."/>
            <person name="Hurley J.H."/>
        </authorList>
    </citation>
    <scope>IDENTIFICATION IN THE BLOC-1 COMPLEX</scope>
    <scope>COMPOSITION OF THE BLOC-1 COMPLEX</scope>
</reference>
<reference key="10">
    <citation type="journal article" date="2012" name="Proc. Natl. Acad. Sci. U.S.A.">
        <title>N-terminal acetylome analyses and functional insights of the N-terminal acetyltransferase NatB.</title>
        <authorList>
            <person name="Van Damme P."/>
            <person name="Lasa M."/>
            <person name="Polevoda B."/>
            <person name="Gazquez C."/>
            <person name="Elosegui-Artola A."/>
            <person name="Kim D.S."/>
            <person name="De Juan-Pardo E."/>
            <person name="Demeyer K."/>
            <person name="Hole K."/>
            <person name="Larrea E."/>
            <person name="Timmerman E."/>
            <person name="Prieto J."/>
            <person name="Arnesen T."/>
            <person name="Sherman F."/>
            <person name="Gevaert K."/>
            <person name="Aldabe R."/>
        </authorList>
    </citation>
    <scope>ACETYLATION [LARGE SCALE ANALYSIS] AT ALA-2</scope>
    <scope>CLEAVAGE OF INITIATOR METHIONINE [LARGE SCALE ANALYSIS]</scope>
    <scope>IDENTIFICATION BY MASS SPECTROMETRY [LARGE SCALE ANALYSIS]</scope>
</reference>
<reference key="11">
    <citation type="journal article" date="2015" name="Dev. Cell">
        <title>BORC, a multisubunit complex that regulates lysosome positioning.</title>
        <authorList>
            <person name="Pu J."/>
            <person name="Schindler C."/>
            <person name="Jia R."/>
            <person name="Jarnik M."/>
            <person name="Backlund P."/>
            <person name="Bonifacino J.S."/>
        </authorList>
    </citation>
    <scope>FUNCTION</scope>
    <scope>IDENTIFICATION OF THE BORC COMPLEX</scope>
    <scope>SUBCELLULAR LOCATION</scope>
</reference>
<reference key="12">
    <citation type="journal article" date="2015" name="Proteomics">
        <title>N-terminome analysis of the human mitochondrial proteome.</title>
        <authorList>
            <person name="Vaca Jacome A.S."/>
            <person name="Rabilloud T."/>
            <person name="Schaeffer-Reiss C."/>
            <person name="Rompais M."/>
            <person name="Ayoub D."/>
            <person name="Lane L."/>
            <person name="Bairoch A."/>
            <person name="Van Dorsselaer A."/>
            <person name="Carapito C."/>
        </authorList>
    </citation>
    <scope>ACETYLATION [LARGE SCALE ANALYSIS] AT ALA-2</scope>
    <scope>CLEAVAGE OF INITIATOR METHIONINE [LARGE SCALE ANALYSIS]</scope>
    <scope>IDENTIFICATION BY MASS SPECTROMETRY [LARGE SCALE ANALYSIS]</scope>
</reference>
<proteinExistence type="evidence at protein level"/>
<name>BL1S2_HUMAN</name>
<sequence length="142" mass="15961">MAAAAEGVLATRSDEPARDDAAVETAEEAKEPAEADITELCRDMFSKMATYLTGELTATSEDYKLLENMNKLTSLKYLEMKDIAINISRNLKDLNQKYAGLQPYLDQINVIEEQVAALEQAAYKLDAYSKKLEAKYKKLEKR</sequence>